<evidence type="ECO:0000255" key="1">
    <source>
        <dbReference type="HAMAP-Rule" id="MF_00052"/>
    </source>
</evidence>
<evidence type="ECO:0000255" key="2">
    <source>
        <dbReference type="PROSITE-ProRule" id="PRU01319"/>
    </source>
</evidence>
<sequence>MTKKAESKELPPFEYPEGYQLFAGVDEVGRGPLVGAVVTAAVILDPNNPIEGLTDSKKLTDKKRELLFPEIQEKALAWSLGRCEAHEIDELNILQATMVAMQRAIAGLNITPDFALIDGNKVPELPMAGLAVVKGDLRVQEISAASIIAKVTRDREMEELDKAYPQYGFAKHKGYPTKAHFEAIEEHGVISEHRRSFKPVKRVLGIE</sequence>
<proteinExistence type="inferred from homology"/>
<reference key="1">
    <citation type="journal article" date="2005" name="Proc. Natl. Acad. Sci. U.S.A.">
        <title>Complete genome sequence of Vibrio fischeri: a symbiotic bacterium with pathogenic congeners.</title>
        <authorList>
            <person name="Ruby E.G."/>
            <person name="Urbanowski M."/>
            <person name="Campbell J."/>
            <person name="Dunn A."/>
            <person name="Faini M."/>
            <person name="Gunsalus R."/>
            <person name="Lostroh P."/>
            <person name="Lupp C."/>
            <person name="McCann J."/>
            <person name="Millikan D."/>
            <person name="Schaefer A."/>
            <person name="Stabb E."/>
            <person name="Stevens A."/>
            <person name="Visick K."/>
            <person name="Whistler C."/>
            <person name="Greenberg E.P."/>
        </authorList>
    </citation>
    <scope>NUCLEOTIDE SEQUENCE [LARGE SCALE GENOMIC DNA]</scope>
    <source>
        <strain>ATCC 700601 / ES114</strain>
    </source>
</reference>
<gene>
    <name evidence="1" type="primary">rnhB</name>
    <name type="ordered locus">VF_1948</name>
</gene>
<name>RNH2_ALIF1</name>
<comment type="function">
    <text evidence="1">Endonuclease that specifically degrades the RNA of RNA-DNA hybrids.</text>
</comment>
<comment type="catalytic activity">
    <reaction evidence="1">
        <text>Endonucleolytic cleavage to 5'-phosphomonoester.</text>
        <dbReference type="EC" id="3.1.26.4"/>
    </reaction>
</comment>
<comment type="cofactor">
    <cofactor evidence="1">
        <name>Mn(2+)</name>
        <dbReference type="ChEBI" id="CHEBI:29035"/>
    </cofactor>
    <cofactor evidence="1">
        <name>Mg(2+)</name>
        <dbReference type="ChEBI" id="CHEBI:18420"/>
    </cofactor>
    <text evidence="1">Manganese or magnesium. Binds 1 divalent metal ion per monomer in the absence of substrate. May bind a second metal ion after substrate binding.</text>
</comment>
<comment type="subcellular location">
    <subcellularLocation>
        <location evidence="1">Cytoplasm</location>
    </subcellularLocation>
</comment>
<comment type="similarity">
    <text evidence="1">Belongs to the RNase HII family.</text>
</comment>
<accession>Q5E3F3</accession>
<dbReference type="EC" id="3.1.26.4" evidence="1"/>
<dbReference type="EMBL" id="CP000020">
    <property type="protein sequence ID" value="AAW86443.1"/>
    <property type="molecule type" value="Genomic_DNA"/>
</dbReference>
<dbReference type="RefSeq" id="WP_011262424.1">
    <property type="nucleotide sequence ID" value="NC_006840.2"/>
</dbReference>
<dbReference type="RefSeq" id="YP_205331.1">
    <property type="nucleotide sequence ID" value="NC_006840.2"/>
</dbReference>
<dbReference type="SMR" id="Q5E3F3"/>
<dbReference type="STRING" id="312309.VF_1948"/>
<dbReference type="EnsemblBacteria" id="AAW86443">
    <property type="protein sequence ID" value="AAW86443"/>
    <property type="gene ID" value="VF_1948"/>
</dbReference>
<dbReference type="GeneID" id="54164644"/>
<dbReference type="KEGG" id="vfi:VF_1948"/>
<dbReference type="PATRIC" id="fig|312309.11.peg.1975"/>
<dbReference type="eggNOG" id="COG0164">
    <property type="taxonomic scope" value="Bacteria"/>
</dbReference>
<dbReference type="HOGENOM" id="CLU_036532_3_2_6"/>
<dbReference type="OrthoDB" id="9803420at2"/>
<dbReference type="Proteomes" id="UP000000537">
    <property type="component" value="Chromosome I"/>
</dbReference>
<dbReference type="GO" id="GO:0005737">
    <property type="term" value="C:cytoplasm"/>
    <property type="evidence" value="ECO:0007669"/>
    <property type="project" value="UniProtKB-SubCell"/>
</dbReference>
<dbReference type="GO" id="GO:0032299">
    <property type="term" value="C:ribonuclease H2 complex"/>
    <property type="evidence" value="ECO:0007669"/>
    <property type="project" value="TreeGrafter"/>
</dbReference>
<dbReference type="GO" id="GO:0030145">
    <property type="term" value="F:manganese ion binding"/>
    <property type="evidence" value="ECO:0007669"/>
    <property type="project" value="UniProtKB-UniRule"/>
</dbReference>
<dbReference type="GO" id="GO:0003723">
    <property type="term" value="F:RNA binding"/>
    <property type="evidence" value="ECO:0007669"/>
    <property type="project" value="InterPro"/>
</dbReference>
<dbReference type="GO" id="GO:0004523">
    <property type="term" value="F:RNA-DNA hybrid ribonuclease activity"/>
    <property type="evidence" value="ECO:0007669"/>
    <property type="project" value="UniProtKB-UniRule"/>
</dbReference>
<dbReference type="GO" id="GO:0043137">
    <property type="term" value="P:DNA replication, removal of RNA primer"/>
    <property type="evidence" value="ECO:0007669"/>
    <property type="project" value="TreeGrafter"/>
</dbReference>
<dbReference type="GO" id="GO:0006298">
    <property type="term" value="P:mismatch repair"/>
    <property type="evidence" value="ECO:0007669"/>
    <property type="project" value="TreeGrafter"/>
</dbReference>
<dbReference type="CDD" id="cd07182">
    <property type="entry name" value="RNase_HII_bacteria_HII_like"/>
    <property type="match status" value="1"/>
</dbReference>
<dbReference type="FunFam" id="3.30.420.10:FF:000006">
    <property type="entry name" value="Ribonuclease HII"/>
    <property type="match status" value="1"/>
</dbReference>
<dbReference type="Gene3D" id="3.30.420.10">
    <property type="entry name" value="Ribonuclease H-like superfamily/Ribonuclease H"/>
    <property type="match status" value="1"/>
</dbReference>
<dbReference type="HAMAP" id="MF_00052_B">
    <property type="entry name" value="RNase_HII_B"/>
    <property type="match status" value="1"/>
</dbReference>
<dbReference type="InterPro" id="IPR022898">
    <property type="entry name" value="RNase_HII"/>
</dbReference>
<dbReference type="InterPro" id="IPR001352">
    <property type="entry name" value="RNase_HII/HIII"/>
</dbReference>
<dbReference type="InterPro" id="IPR024567">
    <property type="entry name" value="RNase_HII/HIII_dom"/>
</dbReference>
<dbReference type="InterPro" id="IPR012337">
    <property type="entry name" value="RNaseH-like_sf"/>
</dbReference>
<dbReference type="InterPro" id="IPR036397">
    <property type="entry name" value="RNaseH_sf"/>
</dbReference>
<dbReference type="NCBIfam" id="NF000594">
    <property type="entry name" value="PRK00015.1-1"/>
    <property type="match status" value="1"/>
</dbReference>
<dbReference type="NCBIfam" id="NF000595">
    <property type="entry name" value="PRK00015.1-3"/>
    <property type="match status" value="1"/>
</dbReference>
<dbReference type="NCBIfam" id="NF000596">
    <property type="entry name" value="PRK00015.1-4"/>
    <property type="match status" value="1"/>
</dbReference>
<dbReference type="PANTHER" id="PTHR10954">
    <property type="entry name" value="RIBONUCLEASE H2 SUBUNIT A"/>
    <property type="match status" value="1"/>
</dbReference>
<dbReference type="PANTHER" id="PTHR10954:SF18">
    <property type="entry name" value="RIBONUCLEASE HII"/>
    <property type="match status" value="1"/>
</dbReference>
<dbReference type="Pfam" id="PF01351">
    <property type="entry name" value="RNase_HII"/>
    <property type="match status" value="1"/>
</dbReference>
<dbReference type="SUPFAM" id="SSF53098">
    <property type="entry name" value="Ribonuclease H-like"/>
    <property type="match status" value="1"/>
</dbReference>
<dbReference type="PROSITE" id="PS51975">
    <property type="entry name" value="RNASE_H_2"/>
    <property type="match status" value="1"/>
</dbReference>
<organism>
    <name type="scientific">Aliivibrio fischeri (strain ATCC 700601 / ES114)</name>
    <name type="common">Vibrio fischeri</name>
    <dbReference type="NCBI Taxonomy" id="312309"/>
    <lineage>
        <taxon>Bacteria</taxon>
        <taxon>Pseudomonadati</taxon>
        <taxon>Pseudomonadota</taxon>
        <taxon>Gammaproteobacteria</taxon>
        <taxon>Vibrionales</taxon>
        <taxon>Vibrionaceae</taxon>
        <taxon>Aliivibrio</taxon>
    </lineage>
</organism>
<feature type="chain" id="PRO_0000111648" description="Ribonuclease HII">
    <location>
        <begin position="1"/>
        <end position="207"/>
    </location>
</feature>
<feature type="domain" description="RNase H type-2" evidence="2">
    <location>
        <begin position="20"/>
        <end position="207"/>
    </location>
</feature>
<feature type="binding site" evidence="1">
    <location>
        <position position="26"/>
    </location>
    <ligand>
        <name>a divalent metal cation</name>
        <dbReference type="ChEBI" id="CHEBI:60240"/>
    </ligand>
</feature>
<feature type="binding site" evidence="1">
    <location>
        <position position="27"/>
    </location>
    <ligand>
        <name>a divalent metal cation</name>
        <dbReference type="ChEBI" id="CHEBI:60240"/>
    </ligand>
</feature>
<feature type="binding site" evidence="1">
    <location>
        <position position="118"/>
    </location>
    <ligand>
        <name>a divalent metal cation</name>
        <dbReference type="ChEBI" id="CHEBI:60240"/>
    </ligand>
</feature>
<keyword id="KW-0963">Cytoplasm</keyword>
<keyword id="KW-0255">Endonuclease</keyword>
<keyword id="KW-0378">Hydrolase</keyword>
<keyword id="KW-0464">Manganese</keyword>
<keyword id="KW-0479">Metal-binding</keyword>
<keyword id="KW-0540">Nuclease</keyword>
<keyword id="KW-1185">Reference proteome</keyword>
<protein>
    <recommendedName>
        <fullName evidence="1">Ribonuclease HII</fullName>
        <shortName evidence="1">RNase HII</shortName>
        <ecNumber evidence="1">3.1.26.4</ecNumber>
    </recommendedName>
</protein>